<name>GATC_NEIG1</name>
<reference key="1">
    <citation type="submission" date="2003-03" db="EMBL/GenBank/DDBJ databases">
        <title>The complete genome sequence of Neisseria gonorrhoeae.</title>
        <authorList>
            <person name="Lewis L.A."/>
            <person name="Gillaspy A.F."/>
            <person name="McLaughlin R.E."/>
            <person name="Gipson M."/>
            <person name="Ducey T.F."/>
            <person name="Ownbey T."/>
            <person name="Hartman K."/>
            <person name="Nydick C."/>
            <person name="Carson M.B."/>
            <person name="Vaughn J."/>
            <person name="Thomson C."/>
            <person name="Song L."/>
            <person name="Lin S."/>
            <person name="Yuan X."/>
            <person name="Najar F."/>
            <person name="Zhan M."/>
            <person name="Ren Q."/>
            <person name="Zhu H."/>
            <person name="Qi S."/>
            <person name="Kenton S.M."/>
            <person name="Lai H."/>
            <person name="White J.D."/>
            <person name="Clifton S."/>
            <person name="Roe B.A."/>
            <person name="Dyer D.W."/>
        </authorList>
    </citation>
    <scope>NUCLEOTIDE SEQUENCE [LARGE SCALE GENOMIC DNA]</scope>
    <source>
        <strain>ATCC 700825 / FA 1090</strain>
    </source>
</reference>
<dbReference type="EC" id="6.3.5.-" evidence="1"/>
<dbReference type="EMBL" id="AE004969">
    <property type="protein sequence ID" value="AAW89390.1"/>
    <property type="molecule type" value="Genomic_DNA"/>
</dbReference>
<dbReference type="RefSeq" id="WP_003688831.1">
    <property type="nucleotide sequence ID" value="NC_002946.2"/>
</dbReference>
<dbReference type="RefSeq" id="YP_207802.1">
    <property type="nucleotide sequence ID" value="NC_002946.2"/>
</dbReference>
<dbReference type="SMR" id="Q5F8U7"/>
<dbReference type="STRING" id="242231.NGO_0663"/>
<dbReference type="GeneID" id="66753003"/>
<dbReference type="KEGG" id="ngo:NGO_0663"/>
<dbReference type="PATRIC" id="fig|242231.10.peg.783"/>
<dbReference type="HOGENOM" id="CLU_105899_2_2_4"/>
<dbReference type="Proteomes" id="UP000000535">
    <property type="component" value="Chromosome"/>
</dbReference>
<dbReference type="GO" id="GO:0050566">
    <property type="term" value="F:asparaginyl-tRNA synthase (glutamine-hydrolyzing) activity"/>
    <property type="evidence" value="ECO:0007669"/>
    <property type="project" value="RHEA"/>
</dbReference>
<dbReference type="GO" id="GO:0005524">
    <property type="term" value="F:ATP binding"/>
    <property type="evidence" value="ECO:0007669"/>
    <property type="project" value="UniProtKB-KW"/>
</dbReference>
<dbReference type="GO" id="GO:0050567">
    <property type="term" value="F:glutaminyl-tRNA synthase (glutamine-hydrolyzing) activity"/>
    <property type="evidence" value="ECO:0007669"/>
    <property type="project" value="UniProtKB-UniRule"/>
</dbReference>
<dbReference type="GO" id="GO:0070681">
    <property type="term" value="P:glutaminyl-tRNAGln biosynthesis via transamidation"/>
    <property type="evidence" value="ECO:0007669"/>
    <property type="project" value="TreeGrafter"/>
</dbReference>
<dbReference type="GO" id="GO:0006450">
    <property type="term" value="P:regulation of translational fidelity"/>
    <property type="evidence" value="ECO:0007669"/>
    <property type="project" value="InterPro"/>
</dbReference>
<dbReference type="GO" id="GO:0006412">
    <property type="term" value="P:translation"/>
    <property type="evidence" value="ECO:0007669"/>
    <property type="project" value="UniProtKB-UniRule"/>
</dbReference>
<dbReference type="Gene3D" id="1.10.20.60">
    <property type="entry name" value="Glu-tRNAGln amidotransferase C subunit, N-terminal domain"/>
    <property type="match status" value="1"/>
</dbReference>
<dbReference type="HAMAP" id="MF_00122">
    <property type="entry name" value="GatC"/>
    <property type="match status" value="1"/>
</dbReference>
<dbReference type="InterPro" id="IPR036113">
    <property type="entry name" value="Asp/Glu-ADT_sf_sub_c"/>
</dbReference>
<dbReference type="InterPro" id="IPR003837">
    <property type="entry name" value="GatC"/>
</dbReference>
<dbReference type="NCBIfam" id="TIGR00135">
    <property type="entry name" value="gatC"/>
    <property type="match status" value="1"/>
</dbReference>
<dbReference type="PANTHER" id="PTHR15004">
    <property type="entry name" value="GLUTAMYL-TRNA(GLN) AMIDOTRANSFERASE SUBUNIT C, MITOCHONDRIAL"/>
    <property type="match status" value="1"/>
</dbReference>
<dbReference type="PANTHER" id="PTHR15004:SF0">
    <property type="entry name" value="GLUTAMYL-TRNA(GLN) AMIDOTRANSFERASE SUBUNIT C, MITOCHONDRIAL"/>
    <property type="match status" value="1"/>
</dbReference>
<dbReference type="Pfam" id="PF02686">
    <property type="entry name" value="GatC"/>
    <property type="match status" value="1"/>
</dbReference>
<dbReference type="SUPFAM" id="SSF141000">
    <property type="entry name" value="Glu-tRNAGln amidotransferase C subunit"/>
    <property type="match status" value="1"/>
</dbReference>
<accession>Q5F8U7</accession>
<gene>
    <name evidence="1" type="primary">gatC</name>
    <name type="ordered locus">NGO_0663</name>
</gene>
<protein>
    <recommendedName>
        <fullName evidence="1">Aspartyl/glutamyl-tRNA(Asn/Gln) amidotransferase subunit C</fullName>
        <shortName evidence="1">Asp/Glu-ADT subunit C</shortName>
        <ecNumber evidence="1">6.3.5.-</ecNumber>
    </recommendedName>
</protein>
<organism>
    <name type="scientific">Neisseria gonorrhoeae (strain ATCC 700825 / FA 1090)</name>
    <dbReference type="NCBI Taxonomy" id="242231"/>
    <lineage>
        <taxon>Bacteria</taxon>
        <taxon>Pseudomonadati</taxon>
        <taxon>Pseudomonadota</taxon>
        <taxon>Betaproteobacteria</taxon>
        <taxon>Neisseriales</taxon>
        <taxon>Neisseriaceae</taxon>
        <taxon>Neisseria</taxon>
    </lineage>
</organism>
<proteinExistence type="inferred from homology"/>
<comment type="function">
    <text evidence="1">Allows the formation of correctly charged Asn-tRNA(Asn) or Gln-tRNA(Gln) through the transamidation of misacylated Asp-tRNA(Asn) or Glu-tRNA(Gln) in organisms which lack either or both of asparaginyl-tRNA or glutaminyl-tRNA synthetases. The reaction takes place in the presence of glutamine and ATP through an activated phospho-Asp-tRNA(Asn) or phospho-Glu-tRNA(Gln).</text>
</comment>
<comment type="catalytic activity">
    <reaction evidence="1">
        <text>L-glutamyl-tRNA(Gln) + L-glutamine + ATP + H2O = L-glutaminyl-tRNA(Gln) + L-glutamate + ADP + phosphate + H(+)</text>
        <dbReference type="Rhea" id="RHEA:17521"/>
        <dbReference type="Rhea" id="RHEA-COMP:9681"/>
        <dbReference type="Rhea" id="RHEA-COMP:9684"/>
        <dbReference type="ChEBI" id="CHEBI:15377"/>
        <dbReference type="ChEBI" id="CHEBI:15378"/>
        <dbReference type="ChEBI" id="CHEBI:29985"/>
        <dbReference type="ChEBI" id="CHEBI:30616"/>
        <dbReference type="ChEBI" id="CHEBI:43474"/>
        <dbReference type="ChEBI" id="CHEBI:58359"/>
        <dbReference type="ChEBI" id="CHEBI:78520"/>
        <dbReference type="ChEBI" id="CHEBI:78521"/>
        <dbReference type="ChEBI" id="CHEBI:456216"/>
    </reaction>
</comment>
<comment type="catalytic activity">
    <reaction evidence="1">
        <text>L-aspartyl-tRNA(Asn) + L-glutamine + ATP + H2O = L-asparaginyl-tRNA(Asn) + L-glutamate + ADP + phosphate + 2 H(+)</text>
        <dbReference type="Rhea" id="RHEA:14513"/>
        <dbReference type="Rhea" id="RHEA-COMP:9674"/>
        <dbReference type="Rhea" id="RHEA-COMP:9677"/>
        <dbReference type="ChEBI" id="CHEBI:15377"/>
        <dbReference type="ChEBI" id="CHEBI:15378"/>
        <dbReference type="ChEBI" id="CHEBI:29985"/>
        <dbReference type="ChEBI" id="CHEBI:30616"/>
        <dbReference type="ChEBI" id="CHEBI:43474"/>
        <dbReference type="ChEBI" id="CHEBI:58359"/>
        <dbReference type="ChEBI" id="CHEBI:78515"/>
        <dbReference type="ChEBI" id="CHEBI:78516"/>
        <dbReference type="ChEBI" id="CHEBI:456216"/>
    </reaction>
</comment>
<comment type="subunit">
    <text evidence="1">Heterotrimer of A, B and C subunits.</text>
</comment>
<comment type="similarity">
    <text evidence="1">Belongs to the GatC family.</text>
</comment>
<keyword id="KW-0067">ATP-binding</keyword>
<keyword id="KW-0436">Ligase</keyword>
<keyword id="KW-0547">Nucleotide-binding</keyword>
<keyword id="KW-0648">Protein biosynthesis</keyword>
<keyword id="KW-1185">Reference proteome</keyword>
<feature type="chain" id="PRO_1000016156" description="Aspartyl/glutamyl-tRNA(Asn/Gln) amidotransferase subunit C">
    <location>
        <begin position="1"/>
        <end position="96"/>
    </location>
</feature>
<evidence type="ECO:0000255" key="1">
    <source>
        <dbReference type="HAMAP-Rule" id="MF_00122"/>
    </source>
</evidence>
<sequence length="96" mass="11032">MALTLADVDKIARLSRLQLTAEEKEKSLQELNDIFTMVEQMQNINTDGIEPMAHPHEVALRLREDEVTETDRAAEYQAVAPEVRNRLYIVPQVIEE</sequence>